<dbReference type="EMBL" id="CP000312">
    <property type="protein sequence ID" value="ABG86597.1"/>
    <property type="molecule type" value="Genomic_DNA"/>
</dbReference>
<dbReference type="RefSeq" id="WP_003459598.1">
    <property type="nucleotide sequence ID" value="NZ_CAXVKH010000001.1"/>
</dbReference>
<dbReference type="KEGG" id="cpr:CPR_1747"/>
<dbReference type="BioCyc" id="CPER289380:GI76-1758-MONOMER"/>
<dbReference type="Proteomes" id="UP000001824">
    <property type="component" value="Chromosome"/>
</dbReference>
<dbReference type="HAMAP" id="MF_01448">
    <property type="entry name" value="UPF0473"/>
    <property type="match status" value="1"/>
</dbReference>
<dbReference type="InterPro" id="IPR009711">
    <property type="entry name" value="UPF0473"/>
</dbReference>
<dbReference type="NCBIfam" id="NF010220">
    <property type="entry name" value="PRK13678.2-3"/>
    <property type="match status" value="1"/>
</dbReference>
<dbReference type="PANTHER" id="PTHR40066">
    <property type="entry name" value="UPF0473 PROTEIN CBO2561/CLC_2432"/>
    <property type="match status" value="1"/>
</dbReference>
<dbReference type="PANTHER" id="PTHR40066:SF1">
    <property type="entry name" value="UPF0473 PROTEIN CBO2561_CLC_2432"/>
    <property type="match status" value="1"/>
</dbReference>
<dbReference type="Pfam" id="PF06949">
    <property type="entry name" value="DUF1292"/>
    <property type="match status" value="1"/>
</dbReference>
<feature type="chain" id="PRO_0000304828" description="UPF0473 protein CPR_1747">
    <location>
        <begin position="1"/>
        <end position="84"/>
    </location>
</feature>
<protein>
    <recommendedName>
        <fullName evidence="1">UPF0473 protein CPR_1747</fullName>
    </recommendedName>
</protein>
<comment type="similarity">
    <text evidence="1">Belongs to the UPF0473 family.</text>
</comment>
<evidence type="ECO:0000255" key="1">
    <source>
        <dbReference type="HAMAP-Rule" id="MF_01448"/>
    </source>
</evidence>
<name>Y1747_CLOPS</name>
<accession>Q0SS45</accession>
<gene>
    <name type="ordered locus">CPR_1747</name>
</gene>
<organism>
    <name type="scientific">Clostridium perfringens (strain SM101 / Type A)</name>
    <dbReference type="NCBI Taxonomy" id="289380"/>
    <lineage>
        <taxon>Bacteria</taxon>
        <taxon>Bacillati</taxon>
        <taxon>Bacillota</taxon>
        <taxon>Clostridia</taxon>
        <taxon>Eubacteriales</taxon>
        <taxon>Clostridiaceae</taxon>
        <taxon>Clostridium</taxon>
    </lineage>
</organism>
<sequence length="84" mass="9586">MNNDLQPIVLVDEEGIETTFNVVTKLDIEEKEYFLLSPEGEEDVVIAMQVVQDEDGEETLAPVENDFEIEMIEEAYATLFAEEE</sequence>
<proteinExistence type="inferred from homology"/>
<reference key="1">
    <citation type="journal article" date="2006" name="Genome Res.">
        <title>Skewed genomic variability in strains of the toxigenic bacterial pathogen, Clostridium perfringens.</title>
        <authorList>
            <person name="Myers G.S.A."/>
            <person name="Rasko D.A."/>
            <person name="Cheung J.K."/>
            <person name="Ravel J."/>
            <person name="Seshadri R."/>
            <person name="DeBoy R.T."/>
            <person name="Ren Q."/>
            <person name="Varga J."/>
            <person name="Awad M.M."/>
            <person name="Brinkac L.M."/>
            <person name="Daugherty S.C."/>
            <person name="Haft D.H."/>
            <person name="Dodson R.J."/>
            <person name="Madupu R."/>
            <person name="Nelson W.C."/>
            <person name="Rosovitz M.J."/>
            <person name="Sullivan S.A."/>
            <person name="Khouri H."/>
            <person name="Dimitrov G.I."/>
            <person name="Watkins K.L."/>
            <person name="Mulligan S."/>
            <person name="Benton J."/>
            <person name="Radune D."/>
            <person name="Fisher D.J."/>
            <person name="Atkins H.S."/>
            <person name="Hiscox T."/>
            <person name="Jost B.H."/>
            <person name="Billington S.J."/>
            <person name="Songer J.G."/>
            <person name="McClane B.A."/>
            <person name="Titball R.W."/>
            <person name="Rood J.I."/>
            <person name="Melville S.B."/>
            <person name="Paulsen I.T."/>
        </authorList>
    </citation>
    <scope>NUCLEOTIDE SEQUENCE [LARGE SCALE GENOMIC DNA]</scope>
    <source>
        <strain>SM101 / Type A</strain>
    </source>
</reference>